<evidence type="ECO:0000255" key="1">
    <source>
        <dbReference type="HAMAP-Rule" id="MF_00033"/>
    </source>
</evidence>
<gene>
    <name evidence="1" type="primary">murG</name>
    <name type="ordered locus">BCI_0519</name>
</gene>
<sequence>MIRKRLIIVAGGTGGHIFPGLAIANNMITQGWDVRWLGTKNRIEADLVPKHGITTYFLSIYGYGLHGKKQKILAIVSILQAVLQSYYIMRKWRPDIVLGMGGYISGPCGLAAWMCKIPLVIHEQNRVTGLTNYYLSKFAKKVLQAFPSVFPNANVVGNPIRKEILAVIEPSLRLCNRTGPIRILVIGGSQGSKIINQILPVVAAQLAGKYVFWHQVGKGALKEVQQVYTSMLKNQLNYKLVEFIDDIAIAYAWADVVICRSGALTISEIAAVGLPAIFVPFMHKDRHQYWNALPLEQLGAAKILEQPNFTAEKVSQILMSWDRSKLFTMAQRARTIAMVDSTERVTSELIELANNTKH</sequence>
<name>MURG_BAUCH</name>
<reference key="1">
    <citation type="journal article" date="2006" name="PLoS Biol.">
        <title>Metabolic complementarity and genomics of the dual bacterial symbiosis of sharpshooters.</title>
        <authorList>
            <person name="Wu D."/>
            <person name="Daugherty S.C."/>
            <person name="Van Aken S.E."/>
            <person name="Pai G.H."/>
            <person name="Watkins K.L."/>
            <person name="Khouri H."/>
            <person name="Tallon L.J."/>
            <person name="Zaborsky J.M."/>
            <person name="Dunbar H.E."/>
            <person name="Tran P.L."/>
            <person name="Moran N.A."/>
            <person name="Eisen J.A."/>
        </authorList>
    </citation>
    <scope>NUCLEOTIDE SEQUENCE [LARGE SCALE GENOMIC DNA]</scope>
</reference>
<organism>
    <name type="scientific">Baumannia cicadellinicola subsp. Homalodisca coagulata</name>
    <dbReference type="NCBI Taxonomy" id="374463"/>
    <lineage>
        <taxon>Bacteria</taxon>
        <taxon>Pseudomonadati</taxon>
        <taxon>Pseudomonadota</taxon>
        <taxon>Gammaproteobacteria</taxon>
        <taxon>Candidatus Palibaumannia</taxon>
    </lineage>
</organism>
<dbReference type="EC" id="2.4.1.227" evidence="1"/>
<dbReference type="EMBL" id="CP000238">
    <property type="protein sequence ID" value="ABF13989.1"/>
    <property type="molecule type" value="Genomic_DNA"/>
</dbReference>
<dbReference type="RefSeq" id="WP_011520682.1">
    <property type="nucleotide sequence ID" value="NC_007984.1"/>
</dbReference>
<dbReference type="SMR" id="Q1LSW5"/>
<dbReference type="STRING" id="374463.BCI_0519"/>
<dbReference type="CAZy" id="GT28">
    <property type="family name" value="Glycosyltransferase Family 28"/>
</dbReference>
<dbReference type="KEGG" id="bci:BCI_0519"/>
<dbReference type="HOGENOM" id="CLU_037404_2_0_6"/>
<dbReference type="OrthoDB" id="9808936at2"/>
<dbReference type="UniPathway" id="UPA00219"/>
<dbReference type="Proteomes" id="UP000002427">
    <property type="component" value="Chromosome"/>
</dbReference>
<dbReference type="GO" id="GO:0005886">
    <property type="term" value="C:plasma membrane"/>
    <property type="evidence" value="ECO:0007669"/>
    <property type="project" value="UniProtKB-SubCell"/>
</dbReference>
<dbReference type="GO" id="GO:0051991">
    <property type="term" value="F:UDP-N-acetyl-D-glucosamine:N-acetylmuramoyl-L-alanyl-D-glutamyl-meso-2,6-diaminopimelyl-D-alanyl-D-alanine-diphosphoundecaprenol 4-beta-N-acetylglucosaminlytransferase activity"/>
    <property type="evidence" value="ECO:0007669"/>
    <property type="project" value="RHEA"/>
</dbReference>
<dbReference type="GO" id="GO:0050511">
    <property type="term" value="F:undecaprenyldiphospho-muramoylpentapeptide beta-N-acetylglucosaminyltransferase activity"/>
    <property type="evidence" value="ECO:0007669"/>
    <property type="project" value="UniProtKB-UniRule"/>
</dbReference>
<dbReference type="GO" id="GO:0005975">
    <property type="term" value="P:carbohydrate metabolic process"/>
    <property type="evidence" value="ECO:0007669"/>
    <property type="project" value="InterPro"/>
</dbReference>
<dbReference type="GO" id="GO:0051301">
    <property type="term" value="P:cell division"/>
    <property type="evidence" value="ECO:0007669"/>
    <property type="project" value="UniProtKB-KW"/>
</dbReference>
<dbReference type="GO" id="GO:0071555">
    <property type="term" value="P:cell wall organization"/>
    <property type="evidence" value="ECO:0007669"/>
    <property type="project" value="UniProtKB-KW"/>
</dbReference>
<dbReference type="GO" id="GO:0030259">
    <property type="term" value="P:lipid glycosylation"/>
    <property type="evidence" value="ECO:0007669"/>
    <property type="project" value="UniProtKB-UniRule"/>
</dbReference>
<dbReference type="GO" id="GO:0009252">
    <property type="term" value="P:peptidoglycan biosynthetic process"/>
    <property type="evidence" value="ECO:0007669"/>
    <property type="project" value="UniProtKB-UniRule"/>
</dbReference>
<dbReference type="GO" id="GO:0008360">
    <property type="term" value="P:regulation of cell shape"/>
    <property type="evidence" value="ECO:0007669"/>
    <property type="project" value="UniProtKB-KW"/>
</dbReference>
<dbReference type="CDD" id="cd03785">
    <property type="entry name" value="GT28_MurG"/>
    <property type="match status" value="1"/>
</dbReference>
<dbReference type="Gene3D" id="3.40.50.2000">
    <property type="entry name" value="Glycogen Phosphorylase B"/>
    <property type="match status" value="2"/>
</dbReference>
<dbReference type="HAMAP" id="MF_00033">
    <property type="entry name" value="MurG"/>
    <property type="match status" value="1"/>
</dbReference>
<dbReference type="InterPro" id="IPR006009">
    <property type="entry name" value="GlcNAc_MurG"/>
</dbReference>
<dbReference type="InterPro" id="IPR007235">
    <property type="entry name" value="Glyco_trans_28_C"/>
</dbReference>
<dbReference type="InterPro" id="IPR004276">
    <property type="entry name" value="GlycoTrans_28_N"/>
</dbReference>
<dbReference type="NCBIfam" id="TIGR01133">
    <property type="entry name" value="murG"/>
    <property type="match status" value="1"/>
</dbReference>
<dbReference type="PANTHER" id="PTHR21015:SF22">
    <property type="entry name" value="GLYCOSYLTRANSFERASE"/>
    <property type="match status" value="1"/>
</dbReference>
<dbReference type="PANTHER" id="PTHR21015">
    <property type="entry name" value="UDP-N-ACETYLGLUCOSAMINE--N-ACETYLMURAMYL-(PENTAPEPTIDE) PYROPHOSPHORYL-UNDECAPRENOL N-ACETYLGLUCOSAMINE TRANSFERASE 1"/>
    <property type="match status" value="1"/>
</dbReference>
<dbReference type="Pfam" id="PF04101">
    <property type="entry name" value="Glyco_tran_28_C"/>
    <property type="match status" value="1"/>
</dbReference>
<dbReference type="Pfam" id="PF03033">
    <property type="entry name" value="Glyco_transf_28"/>
    <property type="match status" value="1"/>
</dbReference>
<dbReference type="SUPFAM" id="SSF53756">
    <property type="entry name" value="UDP-Glycosyltransferase/glycogen phosphorylase"/>
    <property type="match status" value="1"/>
</dbReference>
<comment type="function">
    <text evidence="1">Cell wall formation. Catalyzes the transfer of a GlcNAc subunit on undecaprenyl-pyrophosphoryl-MurNAc-pentapeptide (lipid intermediate I) to form undecaprenyl-pyrophosphoryl-MurNAc-(pentapeptide)GlcNAc (lipid intermediate II).</text>
</comment>
<comment type="catalytic activity">
    <reaction evidence="1">
        <text>di-trans,octa-cis-undecaprenyl diphospho-N-acetyl-alpha-D-muramoyl-L-alanyl-D-glutamyl-meso-2,6-diaminopimeloyl-D-alanyl-D-alanine + UDP-N-acetyl-alpha-D-glucosamine = di-trans,octa-cis-undecaprenyl diphospho-[N-acetyl-alpha-D-glucosaminyl-(1-&gt;4)]-N-acetyl-alpha-D-muramoyl-L-alanyl-D-glutamyl-meso-2,6-diaminopimeloyl-D-alanyl-D-alanine + UDP + H(+)</text>
        <dbReference type="Rhea" id="RHEA:31227"/>
        <dbReference type="ChEBI" id="CHEBI:15378"/>
        <dbReference type="ChEBI" id="CHEBI:57705"/>
        <dbReference type="ChEBI" id="CHEBI:58223"/>
        <dbReference type="ChEBI" id="CHEBI:61387"/>
        <dbReference type="ChEBI" id="CHEBI:61388"/>
        <dbReference type="EC" id="2.4.1.227"/>
    </reaction>
</comment>
<comment type="pathway">
    <text evidence="1">Cell wall biogenesis; peptidoglycan biosynthesis.</text>
</comment>
<comment type="subcellular location">
    <subcellularLocation>
        <location evidence="1">Cell membrane</location>
        <topology evidence="1">Peripheral membrane protein</topology>
        <orientation evidence="1">Cytoplasmic side</orientation>
    </subcellularLocation>
</comment>
<comment type="similarity">
    <text evidence="1">Belongs to the glycosyltransferase 28 family. MurG subfamily.</text>
</comment>
<proteinExistence type="inferred from homology"/>
<protein>
    <recommendedName>
        <fullName evidence="1">UDP-N-acetylglucosamine--N-acetylmuramyl-(pentapeptide) pyrophosphoryl-undecaprenol N-acetylglucosamine transferase</fullName>
        <ecNumber evidence="1">2.4.1.227</ecNumber>
    </recommendedName>
    <alternativeName>
        <fullName evidence="1">Undecaprenyl-PP-MurNAc-pentapeptide-UDPGlcNAc GlcNAc transferase</fullName>
    </alternativeName>
</protein>
<feature type="chain" id="PRO_0000315071" description="UDP-N-acetylglucosamine--N-acetylmuramyl-(pentapeptide) pyrophosphoryl-undecaprenol N-acetylglucosamine transferase">
    <location>
        <begin position="1"/>
        <end position="358"/>
    </location>
</feature>
<feature type="binding site" evidence="1">
    <location>
        <begin position="13"/>
        <end position="15"/>
    </location>
    <ligand>
        <name>UDP-N-acetyl-alpha-D-glucosamine</name>
        <dbReference type="ChEBI" id="CHEBI:57705"/>
    </ligand>
</feature>
<feature type="binding site" evidence="1">
    <location>
        <position position="125"/>
    </location>
    <ligand>
        <name>UDP-N-acetyl-alpha-D-glucosamine</name>
        <dbReference type="ChEBI" id="CHEBI:57705"/>
    </ligand>
</feature>
<feature type="binding site" evidence="1">
    <location>
        <position position="161"/>
    </location>
    <ligand>
        <name>UDP-N-acetyl-alpha-D-glucosamine</name>
        <dbReference type="ChEBI" id="CHEBI:57705"/>
    </ligand>
</feature>
<feature type="binding site" evidence="1">
    <location>
        <position position="189"/>
    </location>
    <ligand>
        <name>UDP-N-acetyl-alpha-D-glucosamine</name>
        <dbReference type="ChEBI" id="CHEBI:57705"/>
    </ligand>
</feature>
<feature type="binding site" evidence="1">
    <location>
        <position position="244"/>
    </location>
    <ligand>
        <name>UDP-N-acetyl-alpha-D-glucosamine</name>
        <dbReference type="ChEBI" id="CHEBI:57705"/>
    </ligand>
</feature>
<feature type="binding site" evidence="1">
    <location>
        <position position="288"/>
    </location>
    <ligand>
        <name>UDP-N-acetyl-alpha-D-glucosamine</name>
        <dbReference type="ChEBI" id="CHEBI:57705"/>
    </ligand>
</feature>
<accession>Q1LSW5</accession>
<keyword id="KW-0131">Cell cycle</keyword>
<keyword id="KW-0132">Cell division</keyword>
<keyword id="KW-1003">Cell membrane</keyword>
<keyword id="KW-0133">Cell shape</keyword>
<keyword id="KW-0961">Cell wall biogenesis/degradation</keyword>
<keyword id="KW-0328">Glycosyltransferase</keyword>
<keyword id="KW-0472">Membrane</keyword>
<keyword id="KW-0573">Peptidoglycan synthesis</keyword>
<keyword id="KW-1185">Reference proteome</keyword>
<keyword id="KW-0808">Transferase</keyword>